<sequence>MAEFTPITIAYGDGIGPEIMDAVLYILRQAEARISLETIEVGEKLYKKHYTSGISEESWNVIQRTGIILKAPITTPQSGGYKSLNVTIRKTLQLFANIRPAVSFHPFTRTLHPNLNLTIIRENEEDLYSGIEYRQTHNMYESLKLISHTGCKKIIRYAFEYAVKNNRKKVTCLSKDNIMKFSDGIFHRVFNEIAKEYPQIDNEHYIIDIGTAKLATTPEIFDIIVTSNLYGDIISDVAAEISGSVGLAGSANIGQHYAMFEAVHGSAPDIAGKGIANPSGLLNAAIMMLVHIGQGDIASLIENAWKKTIEDGVHTFDIYSEHSSSKKVCTKEFAEEVIKRLGQLPMTLPKASYPLIVKKQESKIEYKIDTTEVKKLVGTDIFINIHVFSAHDIADKINKLDIGNFELKTISSKGLKLWPHDLRFEIISDHWCCRFMNKDGTEIKHLDIIILLQALSKANIDFIKVENLFEFDGVACYSLAQGE</sequence>
<evidence type="ECO:0000250" key="1">
    <source>
        <dbReference type="UniProtKB" id="P08200"/>
    </source>
</evidence>
<evidence type="ECO:0000305" key="2"/>
<protein>
    <recommendedName>
        <fullName>Isocitrate dehydrogenase [NADP]</fullName>
        <shortName>IDH</shortName>
        <ecNumber evidence="1">1.1.1.42</ecNumber>
    </recommendedName>
    <alternativeName>
        <fullName>IDP</fullName>
    </alternativeName>
    <alternativeName>
        <fullName>NADP(+)-specific ICDH</fullName>
    </alternativeName>
    <alternativeName>
        <fullName>Oxalosuccinate decarboxylase</fullName>
    </alternativeName>
</protein>
<accession>Q68XA5</accession>
<name>IDH_RICTY</name>
<proteinExistence type="inferred from homology"/>
<organism>
    <name type="scientific">Rickettsia typhi (strain ATCC VR-144 / Wilmington)</name>
    <dbReference type="NCBI Taxonomy" id="257363"/>
    <lineage>
        <taxon>Bacteria</taxon>
        <taxon>Pseudomonadati</taxon>
        <taxon>Pseudomonadota</taxon>
        <taxon>Alphaproteobacteria</taxon>
        <taxon>Rickettsiales</taxon>
        <taxon>Rickettsiaceae</taxon>
        <taxon>Rickettsieae</taxon>
        <taxon>Rickettsia</taxon>
        <taxon>typhus group</taxon>
    </lineage>
</organism>
<feature type="chain" id="PRO_0000083558" description="Isocitrate dehydrogenase [NADP]">
    <location>
        <begin position="1"/>
        <end position="483"/>
    </location>
</feature>
<feature type="binding site" evidence="1">
    <location>
        <position position="74"/>
    </location>
    <ligand>
        <name>NADP(+)</name>
        <dbReference type="ChEBI" id="CHEBI:58349"/>
    </ligand>
</feature>
<feature type="binding site" evidence="1">
    <location>
        <position position="83"/>
    </location>
    <ligand>
        <name>D-threo-isocitrate</name>
        <dbReference type="ChEBI" id="CHEBI:15562"/>
    </ligand>
</feature>
<feature type="binding site" evidence="1">
    <location>
        <position position="85"/>
    </location>
    <ligand>
        <name>D-threo-isocitrate</name>
        <dbReference type="ChEBI" id="CHEBI:15562"/>
    </ligand>
</feature>
<feature type="binding site" evidence="1">
    <location>
        <position position="89"/>
    </location>
    <ligand>
        <name>D-threo-isocitrate</name>
        <dbReference type="ChEBI" id="CHEBI:15562"/>
    </ligand>
</feature>
<feature type="binding site" evidence="1">
    <location>
        <position position="99"/>
    </location>
    <ligand>
        <name>D-threo-isocitrate</name>
        <dbReference type="ChEBI" id="CHEBI:15562"/>
    </ligand>
</feature>
<feature type="binding site" evidence="1">
    <location>
        <position position="121"/>
    </location>
    <ligand>
        <name>D-threo-isocitrate</name>
        <dbReference type="ChEBI" id="CHEBI:15562"/>
    </ligand>
</feature>
<feature type="binding site" evidence="1">
    <location>
        <position position="232"/>
    </location>
    <ligand>
        <name>Mg(2+)</name>
        <dbReference type="ChEBI" id="CHEBI:18420"/>
    </ligand>
</feature>
<feature type="binding site" evidence="1">
    <location>
        <begin position="264"/>
        <end position="270"/>
    </location>
    <ligand>
        <name>NADP(+)</name>
        <dbReference type="ChEBI" id="CHEBI:58349"/>
    </ligand>
</feature>
<feature type="binding site" evidence="1">
    <location>
        <position position="277"/>
    </location>
    <ligand>
        <name>NADP(+)</name>
        <dbReference type="ChEBI" id="CHEBI:58349"/>
    </ligand>
</feature>
<feature type="site" description="Critical for catalysis" evidence="1">
    <location>
        <position position="128"/>
    </location>
</feature>
<feature type="site" description="Critical for catalysis" evidence="1">
    <location>
        <position position="175"/>
    </location>
</feature>
<keyword id="KW-0329">Glyoxylate bypass</keyword>
<keyword id="KW-0460">Magnesium</keyword>
<keyword id="KW-0464">Manganese</keyword>
<keyword id="KW-0479">Metal-binding</keyword>
<keyword id="KW-0521">NADP</keyword>
<keyword id="KW-0560">Oxidoreductase</keyword>
<keyword id="KW-0816">Tricarboxylic acid cycle</keyword>
<comment type="function">
    <text evidence="1">Catalyzes the oxidative decarboxylation of isocitrate to 2-oxoglutarate and carbon dioxide with the concomitant reduction of NADP(+).</text>
</comment>
<comment type="catalytic activity">
    <reaction evidence="1">
        <text>D-threo-isocitrate + NADP(+) = 2-oxoglutarate + CO2 + NADPH</text>
        <dbReference type="Rhea" id="RHEA:19629"/>
        <dbReference type="ChEBI" id="CHEBI:15562"/>
        <dbReference type="ChEBI" id="CHEBI:16526"/>
        <dbReference type="ChEBI" id="CHEBI:16810"/>
        <dbReference type="ChEBI" id="CHEBI:57783"/>
        <dbReference type="ChEBI" id="CHEBI:58349"/>
        <dbReference type="EC" id="1.1.1.42"/>
    </reaction>
</comment>
<comment type="cofactor">
    <cofactor evidence="1">
        <name>Mg(2+)</name>
        <dbReference type="ChEBI" id="CHEBI:18420"/>
    </cofactor>
    <cofactor evidence="1">
        <name>Mn(2+)</name>
        <dbReference type="ChEBI" id="CHEBI:29035"/>
    </cofactor>
    <text evidence="1">Binds 1 Mg(2+) or Mn(2+) ion per subunit.</text>
</comment>
<comment type="subunit">
    <text evidence="1">Homodimer.</text>
</comment>
<comment type="similarity">
    <text evidence="2">Belongs to the isocitrate and isopropylmalate dehydrogenases family.</text>
</comment>
<reference key="1">
    <citation type="journal article" date="2004" name="J. Bacteriol.">
        <title>Complete genome sequence of Rickettsia typhi and comparison with sequences of other Rickettsiae.</title>
        <authorList>
            <person name="McLeod M.P."/>
            <person name="Qin X."/>
            <person name="Karpathy S.E."/>
            <person name="Gioia J."/>
            <person name="Highlander S.K."/>
            <person name="Fox G.E."/>
            <person name="McNeill T.Z."/>
            <person name="Jiang H."/>
            <person name="Muzny D."/>
            <person name="Jacob L.S."/>
            <person name="Hawes A.C."/>
            <person name="Sodergren E."/>
            <person name="Gill R."/>
            <person name="Hume J."/>
            <person name="Morgan M."/>
            <person name="Fan G."/>
            <person name="Amin A.G."/>
            <person name="Gibbs R.A."/>
            <person name="Hong C."/>
            <person name="Yu X.-J."/>
            <person name="Walker D.H."/>
            <person name="Weinstock G.M."/>
        </authorList>
    </citation>
    <scope>NUCLEOTIDE SEQUENCE [LARGE SCALE GENOMIC DNA]</scope>
    <source>
        <strain>ATCC VR-144 / Wilmington</strain>
    </source>
</reference>
<dbReference type="EC" id="1.1.1.42" evidence="1"/>
<dbReference type="EMBL" id="AE017197">
    <property type="protein sequence ID" value="AAU03737.1"/>
    <property type="molecule type" value="Genomic_DNA"/>
</dbReference>
<dbReference type="RefSeq" id="WP_011190722.1">
    <property type="nucleotide sequence ID" value="NC_006142.1"/>
</dbReference>
<dbReference type="SMR" id="Q68XA5"/>
<dbReference type="KEGG" id="rty:RT0256"/>
<dbReference type="eggNOG" id="COG0473">
    <property type="taxonomic scope" value="Bacteria"/>
</dbReference>
<dbReference type="HOGENOM" id="CLU_031953_1_3_5"/>
<dbReference type="OrthoDB" id="9767905at2"/>
<dbReference type="Proteomes" id="UP000000604">
    <property type="component" value="Chromosome"/>
</dbReference>
<dbReference type="GO" id="GO:0004449">
    <property type="term" value="F:isocitrate dehydrogenase (NAD+) activity"/>
    <property type="evidence" value="ECO:0007669"/>
    <property type="project" value="TreeGrafter"/>
</dbReference>
<dbReference type="GO" id="GO:0004450">
    <property type="term" value="F:isocitrate dehydrogenase (NADP+) activity"/>
    <property type="evidence" value="ECO:0007669"/>
    <property type="project" value="UniProtKB-EC"/>
</dbReference>
<dbReference type="GO" id="GO:0000287">
    <property type="term" value="F:magnesium ion binding"/>
    <property type="evidence" value="ECO:0007669"/>
    <property type="project" value="InterPro"/>
</dbReference>
<dbReference type="GO" id="GO:0051287">
    <property type="term" value="F:NAD binding"/>
    <property type="evidence" value="ECO:0007669"/>
    <property type="project" value="InterPro"/>
</dbReference>
<dbReference type="GO" id="GO:0006097">
    <property type="term" value="P:glyoxylate cycle"/>
    <property type="evidence" value="ECO:0007669"/>
    <property type="project" value="UniProtKB-KW"/>
</dbReference>
<dbReference type="GO" id="GO:0006102">
    <property type="term" value="P:isocitrate metabolic process"/>
    <property type="evidence" value="ECO:0007669"/>
    <property type="project" value="TreeGrafter"/>
</dbReference>
<dbReference type="GO" id="GO:0006099">
    <property type="term" value="P:tricarboxylic acid cycle"/>
    <property type="evidence" value="ECO:0007669"/>
    <property type="project" value="UniProtKB-KW"/>
</dbReference>
<dbReference type="FunFam" id="3.40.718.10:FF:000020">
    <property type="entry name" value="Isocitrate dehydrogenase"/>
    <property type="match status" value="1"/>
</dbReference>
<dbReference type="Gene3D" id="3.30.70.1570">
    <property type="match status" value="1"/>
</dbReference>
<dbReference type="Gene3D" id="3.40.718.10">
    <property type="entry name" value="Isopropylmalate Dehydrogenase"/>
    <property type="match status" value="1"/>
</dbReference>
<dbReference type="InterPro" id="IPR019818">
    <property type="entry name" value="IsoCit/isopropylmalate_DH_CS"/>
</dbReference>
<dbReference type="InterPro" id="IPR014273">
    <property type="entry name" value="Isocitrate_DH_bac-typ"/>
</dbReference>
<dbReference type="InterPro" id="IPR040978">
    <property type="entry name" value="Isocitrate_DH_TT1725_C"/>
</dbReference>
<dbReference type="InterPro" id="IPR046997">
    <property type="entry name" value="Isocitrate_DH_TT1725_C_sf"/>
</dbReference>
<dbReference type="InterPro" id="IPR024084">
    <property type="entry name" value="IsoPropMal-DH-like_dom"/>
</dbReference>
<dbReference type="NCBIfam" id="TIGR02924">
    <property type="entry name" value="ICDH_alpha"/>
    <property type="match status" value="1"/>
</dbReference>
<dbReference type="NCBIfam" id="NF006673">
    <property type="entry name" value="PRK09222.1"/>
    <property type="match status" value="1"/>
</dbReference>
<dbReference type="PANTHER" id="PTHR11835">
    <property type="entry name" value="DECARBOXYLATING DEHYDROGENASES-ISOCITRATE, ISOPROPYLMALATE, TARTRATE"/>
    <property type="match status" value="1"/>
</dbReference>
<dbReference type="PANTHER" id="PTHR11835:SF43">
    <property type="entry name" value="ISOPROPYLMALATE DEHYDROGENASE-LIKE DOMAIN-CONTAINING PROTEIN"/>
    <property type="match status" value="1"/>
</dbReference>
<dbReference type="Pfam" id="PF00180">
    <property type="entry name" value="Iso_dh"/>
    <property type="match status" value="1"/>
</dbReference>
<dbReference type="Pfam" id="PF18324">
    <property type="entry name" value="Isocitrate_DH_C_bact"/>
    <property type="match status" value="1"/>
</dbReference>
<dbReference type="SMART" id="SM01329">
    <property type="entry name" value="Iso_dh"/>
    <property type="match status" value="1"/>
</dbReference>
<dbReference type="SUPFAM" id="SSF53659">
    <property type="entry name" value="Isocitrate/Isopropylmalate dehydrogenase-like"/>
    <property type="match status" value="1"/>
</dbReference>
<dbReference type="PROSITE" id="PS00470">
    <property type="entry name" value="IDH_IMDH"/>
    <property type="match status" value="1"/>
</dbReference>
<gene>
    <name type="primary">icd</name>
    <name type="ordered locus">RT0256</name>
</gene>